<protein>
    <recommendedName>
        <fullName>Bifunctional autolysin</fullName>
    </recommendedName>
    <domain>
        <recommendedName>
            <fullName>N-acetylmuramoyl-L-alanine amidase</fullName>
            <ecNumber>3.5.1.28</ecNumber>
        </recommendedName>
    </domain>
    <domain>
        <recommendedName>
            <fullName>Mannosyl-glycoprotein endo-beta-N-acetylglucosaminidase</fullName>
            <ecNumber>3.2.1.96</ecNumber>
        </recommendedName>
    </domain>
</protein>
<comment type="function">
    <text evidence="1">Endohydrolysis of the di-N-acetylchitobiosyl unit in high-mannose glycopeptides and glycoproteins containing the -[(Man)5(GlcNAc)2]-Asn structure. One N-acetyl-D-glucosamine residue remains attached to the protein; the rest of the oligosaccharide is released intact. Cleaves the peptidoglycan connecting the daughter cells at the end of the cell division cycle, resulting in the separation of the two newly divided cells. Acts as an autolysin in penicillin-induced lysis (By similarity).</text>
</comment>
<comment type="catalytic activity">
    <reaction>
        <text>Hydrolyzes the link between N-acetylmuramoyl residues and L-amino acid residues in certain cell-wall glycopeptides.</text>
        <dbReference type="EC" id="3.5.1.28"/>
    </reaction>
</comment>
<comment type="catalytic activity">
    <reaction>
        <text>an N(4)-(oligosaccharide-(1-&gt;3)-[oligosaccharide-(1-&gt;6)]-beta-D-Man-(1-&gt;4)-beta-D-GlcNAc-(1-&gt;4)-alpha-D-GlcNAc)-L-asparaginyl-[protein] + H2O = an oligosaccharide-(1-&gt;3)-[oligosaccharide-(1-&gt;6)]-beta-D-Man-(1-&gt;4)-D-GlcNAc + N(4)-(N-acetyl-beta-D-glucosaminyl)-L-asparaginyl-[protein]</text>
        <dbReference type="Rhea" id="RHEA:73067"/>
        <dbReference type="Rhea" id="RHEA-COMP:12603"/>
        <dbReference type="Rhea" id="RHEA-COMP:18176"/>
        <dbReference type="ChEBI" id="CHEBI:15377"/>
        <dbReference type="ChEBI" id="CHEBI:132248"/>
        <dbReference type="ChEBI" id="CHEBI:192714"/>
        <dbReference type="ChEBI" id="CHEBI:192715"/>
        <dbReference type="EC" id="3.2.1.96"/>
    </reaction>
</comment>
<comment type="subunit">
    <text evidence="1">Oligomer; forms a ring structure at the cell surface which is important for efficient partitioning of daughter cells after cell division.</text>
</comment>
<comment type="subcellular location">
    <subcellularLocation>
        <location evidence="1">Secreted</location>
    </subcellularLocation>
    <text evidence="1">Secreted, and then anchored on the cell surface at the peripheral cell wall above the completed septum (septal region), for the next cell division cycle.</text>
</comment>
<comment type="domain">
    <text evidence="1">The GW domains are responsible for directing the proteins to the septal region.</text>
</comment>
<comment type="PTM">
    <text evidence="1">Undergoes proteolytic processing to generate the two extracellular lytic enzymes, probably at the septal region on the cell surface.</text>
</comment>
<comment type="similarity">
    <text evidence="5">In the N-terminal section; belongs to the N-acetylmuramoyl-L-alanine amidase 2 family.</text>
</comment>
<comment type="similarity">
    <text evidence="5">In the C-terminal section; belongs to the glycosyl hydrolase 73 family.</text>
</comment>
<sequence length="1248" mass="136751">MAKKFNYKLPSMVALTLVGSAVTAHQVQAAETTQDQTTNKNVLDSNKVKATTEQAKAEVKNPTQNISGTQVYQDPAIVQPKTANNKTGNAQVSQKVDTAQVNGDTRANQSATTNNTQPVAKSTSTTAPKTNTNVTNAGYSLVDDEDDNSEHQINPELIKSAAKPAALETQYKAAAPKAKTEATPKVTTFSASAQPRSVAATPKTSLPKYKPQVNSSINDYIRKNNLKAPKIEEDYTSYFPKYAYRNGVGRPEGIVVHDTANDRSTINGEISYMKNNYQNAFVHAFVDGDRIIETAPTDYLSWGVGAVGNPRFINVEIVHTHDYASFARSMNNYADYAATQLQYYGLKPDSAEYDGNGTVWTHYAVSKYLGGTDHADPHGYLRSHNYSYDQLYDLINEKYLIKMGKVAPWGTQFTTTPTTPSKPTTPSKPSTGKLTVAANNGVAQIKPTNSGLYTTVYDKTGKATNEVQKTFAVSKTATLGNQKFYLVQDYNSGNKFGWVKEGDVVYNTAKSPVNVNQSYSIKSGTKLYTVPWGTSKQVAGSVSGSGNQTFKASKQQQIDKSIYLYGSVNGKSGWVSKAYLVDTAKPTPTPIPKPSTPTTNNKLTVSSLNGVAQINAKNNGLFTTVYDKTGKPTKEVQKTFAVTKEASLGGNKFYLVKDYNSPTLIGWVKQGDVIYNNAKSPVNVMQTYTVKPGTKLYSVPWGTYKQEAGAVSGTGNQTFKATKQQQIDKSIYLFGTVNGKSGWVSKAYLAVPAAPKKAVAQPKTAVKAYTVTKPQTTQTVSKIAQVKPNNTGIRASVYEKTAKNGAKYADRTFYVTKERAHGNETYVLLNNTSHNIPLGWFNVKDLNVQNLGKEVKTTQKYTVNKSNNGLSMVPWGTKNQVILTGNNIAQGTFNATKQVSVGKDVYLYGTINNRTGWVNAKDLTAPTAVKPTTSAAKDYNYTYVIKNGNGYYYVTPNSDTAKYSLKAFNEQPFAVVKEQVINGQTWYYGKLSNGKLAWIKSTDLAKELIKYNQTGMTLNQVAQIQAGLQYKPQVQRVPGKWTDANFNDVKHAMDTKRLAQDPALKYQFLRLDQPQNISIDKINQFLKGKGVLENQGAAFNKAAQMYGINEVYLISHALLETGNGTSQLAKGADVVNNKVVTNSNTKYHNVFGIAAYDNDPLREGIKYAKQAGWDTVSKAIVGGAKFIGNSYVKAGQNTLYKMRWNPAHPGTHQYATDVDWANINAKIIKGYYDKIGEVGKYFDIPQYK</sequence>
<keyword id="KW-0002">3D-structure</keyword>
<keyword id="KW-0961">Cell wall biogenesis/degradation</keyword>
<keyword id="KW-0378">Hydrolase</keyword>
<keyword id="KW-0511">Multifunctional enzyme</keyword>
<keyword id="KW-0677">Repeat</keyword>
<keyword id="KW-0964">Secreted</keyword>
<keyword id="KW-0732">Signal</keyword>
<organism>
    <name type="scientific">Staphylococcus aureus (strain Mu50 / ATCC 700699)</name>
    <dbReference type="NCBI Taxonomy" id="158878"/>
    <lineage>
        <taxon>Bacteria</taxon>
        <taxon>Bacillati</taxon>
        <taxon>Bacillota</taxon>
        <taxon>Bacilli</taxon>
        <taxon>Bacillales</taxon>
        <taxon>Staphylococcaceae</taxon>
        <taxon>Staphylococcus</taxon>
    </lineage>
</organism>
<dbReference type="EC" id="3.5.1.28"/>
<dbReference type="EC" id="3.2.1.96"/>
<dbReference type="EMBL" id="BA000017">
    <property type="protein sequence ID" value="BAB57214.2"/>
    <property type="molecule type" value="Genomic_DNA"/>
</dbReference>
<dbReference type="EMBL" id="AJ567416">
    <property type="protein sequence ID" value="CAD98826.1"/>
    <property type="molecule type" value="Genomic_DNA"/>
</dbReference>
<dbReference type="RefSeq" id="WP_001074534.1">
    <property type="nucleotide sequence ID" value="NC_002758.2"/>
</dbReference>
<dbReference type="PDB" id="6FXO">
    <property type="method" value="X-ray"/>
    <property type="resolution" value="2.28 A"/>
    <property type="chains" value="A=1007-1248"/>
</dbReference>
<dbReference type="PDBsum" id="6FXO"/>
<dbReference type="SMR" id="Q931U5"/>
<dbReference type="CAZy" id="GH73">
    <property type="family name" value="Glycoside Hydrolase Family 73"/>
</dbReference>
<dbReference type="KEGG" id="sav:SAV1052"/>
<dbReference type="HOGENOM" id="CLU_005906_0_0_9"/>
<dbReference type="Proteomes" id="UP000002481">
    <property type="component" value="Chromosome"/>
</dbReference>
<dbReference type="GO" id="GO:0005576">
    <property type="term" value="C:extracellular region"/>
    <property type="evidence" value="ECO:0007669"/>
    <property type="project" value="UniProtKB-SubCell"/>
</dbReference>
<dbReference type="GO" id="GO:0004040">
    <property type="term" value="F:amidase activity"/>
    <property type="evidence" value="ECO:0007669"/>
    <property type="project" value="InterPro"/>
</dbReference>
<dbReference type="GO" id="GO:0033925">
    <property type="term" value="F:mannosyl-glycoprotein endo-beta-N-acetylglucosaminidase activity"/>
    <property type="evidence" value="ECO:0007669"/>
    <property type="project" value="UniProtKB-EC"/>
</dbReference>
<dbReference type="GO" id="GO:0008745">
    <property type="term" value="F:N-acetylmuramoyl-L-alanine amidase activity"/>
    <property type="evidence" value="ECO:0007669"/>
    <property type="project" value="UniProtKB-EC"/>
</dbReference>
<dbReference type="GO" id="GO:0071555">
    <property type="term" value="P:cell wall organization"/>
    <property type="evidence" value="ECO:0007669"/>
    <property type="project" value="UniProtKB-KW"/>
</dbReference>
<dbReference type="GO" id="GO:0009253">
    <property type="term" value="P:peptidoglycan catabolic process"/>
    <property type="evidence" value="ECO:0007669"/>
    <property type="project" value="InterPro"/>
</dbReference>
<dbReference type="CDD" id="cd06583">
    <property type="entry name" value="PGRP"/>
    <property type="match status" value="1"/>
</dbReference>
<dbReference type="Gene3D" id="1.10.530.10">
    <property type="match status" value="1"/>
</dbReference>
<dbReference type="Gene3D" id="2.30.30.170">
    <property type="match status" value="7"/>
</dbReference>
<dbReference type="Gene3D" id="3.40.80.10">
    <property type="entry name" value="Peptidoglycan recognition protein-like"/>
    <property type="match status" value="1"/>
</dbReference>
<dbReference type="InterPro" id="IPR036505">
    <property type="entry name" value="Amidase/PGRP_sf"/>
</dbReference>
<dbReference type="InterPro" id="IPR002502">
    <property type="entry name" value="Amidase_domain"/>
</dbReference>
<dbReference type="InterPro" id="IPR025987">
    <property type="entry name" value="GW_dom"/>
</dbReference>
<dbReference type="InterPro" id="IPR038200">
    <property type="entry name" value="GW_dom_sf"/>
</dbReference>
<dbReference type="InterPro" id="IPR002901">
    <property type="entry name" value="MGlyc_endo_b_GlcNAc-like_dom"/>
</dbReference>
<dbReference type="Pfam" id="PF01510">
    <property type="entry name" value="Amidase_2"/>
    <property type="match status" value="1"/>
</dbReference>
<dbReference type="Pfam" id="PF01832">
    <property type="entry name" value="Glucosaminidase"/>
    <property type="match status" value="1"/>
</dbReference>
<dbReference type="Pfam" id="PF13457">
    <property type="entry name" value="GW"/>
    <property type="match status" value="6"/>
</dbReference>
<dbReference type="SMART" id="SM00644">
    <property type="entry name" value="Ami_2"/>
    <property type="match status" value="1"/>
</dbReference>
<dbReference type="SMART" id="SM00047">
    <property type="entry name" value="LYZ2"/>
    <property type="match status" value="1"/>
</dbReference>
<dbReference type="SUPFAM" id="SSF55846">
    <property type="entry name" value="N-acetylmuramoyl-L-alanine amidase-like"/>
    <property type="match status" value="1"/>
</dbReference>
<dbReference type="SUPFAM" id="SSF82057">
    <property type="entry name" value="Prokaryotic SH3-related domain"/>
    <property type="match status" value="1"/>
</dbReference>
<dbReference type="PROSITE" id="PS51780">
    <property type="entry name" value="GW"/>
    <property type="match status" value="7"/>
</dbReference>
<evidence type="ECO:0000250" key="1"/>
<evidence type="ECO:0000255" key="2"/>
<evidence type="ECO:0000255" key="3">
    <source>
        <dbReference type="PROSITE-ProRule" id="PRU01116"/>
    </source>
</evidence>
<evidence type="ECO:0000256" key="4">
    <source>
        <dbReference type="SAM" id="MobiDB-lite"/>
    </source>
</evidence>
<evidence type="ECO:0000305" key="5"/>
<evidence type="ECO:0007829" key="6">
    <source>
        <dbReference type="PDB" id="6FXO"/>
    </source>
</evidence>
<feature type="signal peptide" evidence="2">
    <location>
        <begin position="1"/>
        <end position="29"/>
    </location>
</feature>
<feature type="chain" id="PRO_0000045474" description="Bifunctional autolysin">
    <location>
        <begin position="30"/>
        <end position="1248"/>
    </location>
</feature>
<feature type="domain" description="GW 1" evidence="3">
    <location>
        <begin position="435"/>
        <end position="509"/>
    </location>
</feature>
<feature type="domain" description="GW 2" evidence="3">
    <location>
        <begin position="511"/>
        <end position="585"/>
    </location>
</feature>
<feature type="domain" description="GW 3" evidence="3">
    <location>
        <begin position="604"/>
        <end position="678"/>
    </location>
</feature>
<feature type="domain" description="GW 4" evidence="3">
    <location>
        <begin position="680"/>
        <end position="754"/>
    </location>
</feature>
<feature type="domain" description="GW 5" evidence="3">
    <location>
        <begin position="776"/>
        <end position="851"/>
    </location>
</feature>
<feature type="domain" description="GW 6" evidence="3">
    <location>
        <begin position="853"/>
        <end position="928"/>
    </location>
</feature>
<feature type="domain" description="GW 7" evidence="3">
    <location>
        <begin position="935"/>
        <end position="1009"/>
    </location>
</feature>
<feature type="region of interest" description="Disordered" evidence="4">
    <location>
        <begin position="103"/>
        <end position="134"/>
    </location>
</feature>
<feature type="region of interest" description="N-acetylmuramoyl-L-alanine amidase" evidence="1">
    <location>
        <begin position="191"/>
        <end position="767"/>
    </location>
</feature>
<feature type="region of interest" description="Endo-beta-N-acetylglucosaminidase" evidence="1">
    <location>
        <begin position="768"/>
        <end position="1248"/>
    </location>
</feature>
<feature type="strand" evidence="6">
    <location>
        <begin position="1008"/>
        <end position="1013"/>
    </location>
</feature>
<feature type="helix" evidence="6">
    <location>
        <begin position="1018"/>
        <end position="1026"/>
    </location>
</feature>
<feature type="helix" evidence="6">
    <location>
        <begin position="1046"/>
        <end position="1053"/>
    </location>
</feature>
<feature type="helix" evidence="6">
    <location>
        <begin position="1055"/>
        <end position="1060"/>
    </location>
</feature>
<feature type="helix" evidence="6">
    <location>
        <begin position="1064"/>
        <end position="1068"/>
    </location>
</feature>
<feature type="helix" evidence="6">
    <location>
        <begin position="1079"/>
        <end position="1086"/>
    </location>
</feature>
<feature type="helix" evidence="6">
    <location>
        <begin position="1096"/>
        <end position="1106"/>
    </location>
</feature>
<feature type="helix" evidence="6">
    <location>
        <begin position="1110"/>
        <end position="1120"/>
    </location>
</feature>
<feature type="turn" evidence="6">
    <location>
        <begin position="1121"/>
        <end position="1125"/>
    </location>
</feature>
<feature type="helix" evidence="6">
    <location>
        <begin position="1127"/>
        <end position="1130"/>
    </location>
</feature>
<feature type="strand" evidence="6">
    <location>
        <begin position="1156"/>
        <end position="1158"/>
    </location>
</feature>
<feature type="helix" evidence="6">
    <location>
        <begin position="1162"/>
        <end position="1170"/>
    </location>
</feature>
<feature type="helix" evidence="6">
    <location>
        <begin position="1176"/>
        <end position="1184"/>
    </location>
</feature>
<feature type="turn" evidence="6">
    <location>
        <begin position="1185"/>
        <end position="1195"/>
    </location>
</feature>
<feature type="helix" evidence="6">
    <location>
        <begin position="1199"/>
        <end position="1204"/>
    </location>
</feature>
<feature type="helix" evidence="6">
    <location>
        <begin position="1220"/>
        <end position="1235"/>
    </location>
</feature>
<feature type="strand" evidence="6">
    <location>
        <begin position="1241"/>
        <end position="1246"/>
    </location>
</feature>
<gene>
    <name type="primary">atl</name>
    <name type="synonym">nag</name>
    <name type="ordered locus">SAV1052</name>
</gene>
<name>ATL_STAAM</name>
<proteinExistence type="evidence at protein level"/>
<reference key="1">
    <citation type="journal article" date="2001" name="Lancet">
        <title>Whole genome sequencing of meticillin-resistant Staphylococcus aureus.</title>
        <authorList>
            <person name="Kuroda M."/>
            <person name="Ohta T."/>
            <person name="Uchiyama I."/>
            <person name="Baba T."/>
            <person name="Yuzawa H."/>
            <person name="Kobayashi I."/>
            <person name="Cui L."/>
            <person name="Oguchi A."/>
            <person name="Aoki K."/>
            <person name="Nagai Y."/>
            <person name="Lian J.-Q."/>
            <person name="Ito T."/>
            <person name="Kanamori M."/>
            <person name="Matsumaru H."/>
            <person name="Maruyama A."/>
            <person name="Murakami H."/>
            <person name="Hosoyama A."/>
            <person name="Mizutani-Ui Y."/>
            <person name="Takahashi N.K."/>
            <person name="Sawano T."/>
            <person name="Inoue R."/>
            <person name="Kaito C."/>
            <person name="Sekimizu K."/>
            <person name="Hirakawa H."/>
            <person name="Kuhara S."/>
            <person name="Goto S."/>
            <person name="Yabuzaki J."/>
            <person name="Kanehisa M."/>
            <person name="Yamashita A."/>
            <person name="Oshima K."/>
            <person name="Furuya K."/>
            <person name="Yoshino C."/>
            <person name="Shiba T."/>
            <person name="Hattori M."/>
            <person name="Ogasawara N."/>
            <person name="Hayashi H."/>
            <person name="Hiramatsu K."/>
        </authorList>
    </citation>
    <scope>NUCLEOTIDE SEQUENCE [LARGE SCALE GENOMIC DNA]</scope>
    <source>
        <strain>Mu50 / ATCC 700699</strain>
    </source>
</reference>
<reference key="2">
    <citation type="submission" date="2003-06" db="EMBL/GenBank/DDBJ databases">
        <title>Genetic analysis of seventeen genes in Staphylococcus aureus with reduced susceptibility to vancomycin (VRSA) and heteroVRSA (hVRSA).</title>
        <authorList>
            <person name="Wootton M."/>
            <person name="Avison M.B."/>
            <person name="Bennett P.M."/>
            <person name="Howe R.A."/>
            <person name="MacGowan A.P."/>
            <person name="Walsh T.R."/>
        </authorList>
    </citation>
    <scope>NUCLEOTIDE SEQUENCE [GENOMIC DNA] OF 785-1248</scope>
</reference>
<accession>Q931U5</accession>
<accession>Q7WY94</accession>
<accession>Q7WY95</accession>